<reference key="1">
    <citation type="journal article" date="2003" name="Genome Res.">
        <title>Tropheryma whipplei twist: a human pathogenic Actinobacteria with a reduced genome.</title>
        <authorList>
            <person name="Raoult D."/>
            <person name="Ogata H."/>
            <person name="Audic S."/>
            <person name="Robert C."/>
            <person name="Suhre K."/>
            <person name="Drancourt M."/>
            <person name="Claverie J.-M."/>
        </authorList>
    </citation>
    <scope>NUCLEOTIDE SEQUENCE [LARGE SCALE GENOMIC DNA]</scope>
    <source>
        <strain>Twist</strain>
    </source>
</reference>
<name>RS13_TROWT</name>
<evidence type="ECO:0000255" key="1">
    <source>
        <dbReference type="HAMAP-Rule" id="MF_01315"/>
    </source>
</evidence>
<evidence type="ECO:0000256" key="2">
    <source>
        <dbReference type="SAM" id="MobiDB-lite"/>
    </source>
</evidence>
<evidence type="ECO:0000305" key="3"/>
<comment type="function">
    <text evidence="1">Located at the top of the head of the 30S subunit, it contacts several helices of the 16S rRNA. In the 70S ribosome it contacts the 23S rRNA (bridge B1a) and protein L5 of the 50S subunit (bridge B1b), connecting the 2 subunits; these bridges are implicated in subunit movement. Contacts the tRNAs in the A and P-sites.</text>
</comment>
<comment type="subunit">
    <text evidence="1">Part of the 30S ribosomal subunit. Forms a loose heterodimer with protein S19. Forms two bridges to the 50S subunit in the 70S ribosome.</text>
</comment>
<comment type="similarity">
    <text evidence="1">Belongs to the universal ribosomal protein uS13 family.</text>
</comment>
<protein>
    <recommendedName>
        <fullName evidence="1">Small ribosomal subunit protein uS13</fullName>
    </recommendedName>
    <alternativeName>
        <fullName evidence="3">30S ribosomal protein S13</fullName>
    </alternativeName>
</protein>
<accession>P66397</accession>
<accession>P59757</accession>
<organism>
    <name type="scientific">Tropheryma whipplei (strain Twist)</name>
    <name type="common">Whipple's bacillus</name>
    <dbReference type="NCBI Taxonomy" id="203267"/>
    <lineage>
        <taxon>Bacteria</taxon>
        <taxon>Bacillati</taxon>
        <taxon>Actinomycetota</taxon>
        <taxon>Actinomycetes</taxon>
        <taxon>Micrococcales</taxon>
        <taxon>Tropherymataceae</taxon>
        <taxon>Tropheryma</taxon>
    </lineage>
</organism>
<feature type="chain" id="PRO_0000132163" description="Small ribosomal subunit protein uS13">
    <location>
        <begin position="1"/>
        <end position="124"/>
    </location>
</feature>
<feature type="region of interest" description="Disordered" evidence="2">
    <location>
        <begin position="95"/>
        <end position="124"/>
    </location>
</feature>
<feature type="compositionally biased region" description="Polar residues" evidence="2">
    <location>
        <begin position="100"/>
        <end position="109"/>
    </location>
</feature>
<feature type="compositionally biased region" description="Basic residues" evidence="2">
    <location>
        <begin position="111"/>
        <end position="124"/>
    </location>
</feature>
<sequence length="124" mass="13775">MARVAGVDIPGNKRVEIGLTYICGIGPTRSRHALTAAGISFDTRVKDLTDDQLVALRAHIQNSYRIEGDLRREVASDIRRKVEIGCYQGLRHRRGLPVNGQRTRTNARSSKGPRRTVAGKKKAR</sequence>
<proteinExistence type="inferred from homology"/>
<keyword id="KW-1185">Reference proteome</keyword>
<keyword id="KW-0687">Ribonucleoprotein</keyword>
<keyword id="KW-0689">Ribosomal protein</keyword>
<keyword id="KW-0694">RNA-binding</keyword>
<keyword id="KW-0699">rRNA-binding</keyword>
<keyword id="KW-0820">tRNA-binding</keyword>
<gene>
    <name evidence="1" type="primary">rpsM</name>
    <name type="ordered locus">TWT_530</name>
</gene>
<dbReference type="EMBL" id="AE014184">
    <property type="protein sequence ID" value="AAO44627.1"/>
    <property type="molecule type" value="Genomic_DNA"/>
</dbReference>
<dbReference type="RefSeq" id="WP_011096188.1">
    <property type="nucleotide sequence ID" value="NC_004572.3"/>
</dbReference>
<dbReference type="SMR" id="P66397"/>
<dbReference type="STRING" id="203267.TWT_530"/>
<dbReference type="GeneID" id="67388006"/>
<dbReference type="KEGG" id="twh:TWT_530"/>
<dbReference type="eggNOG" id="COG0099">
    <property type="taxonomic scope" value="Bacteria"/>
</dbReference>
<dbReference type="HOGENOM" id="CLU_103849_1_2_11"/>
<dbReference type="OrthoDB" id="9803610at2"/>
<dbReference type="Proteomes" id="UP000002200">
    <property type="component" value="Chromosome"/>
</dbReference>
<dbReference type="GO" id="GO:0005829">
    <property type="term" value="C:cytosol"/>
    <property type="evidence" value="ECO:0007669"/>
    <property type="project" value="TreeGrafter"/>
</dbReference>
<dbReference type="GO" id="GO:0015935">
    <property type="term" value="C:small ribosomal subunit"/>
    <property type="evidence" value="ECO:0007669"/>
    <property type="project" value="TreeGrafter"/>
</dbReference>
<dbReference type="GO" id="GO:0019843">
    <property type="term" value="F:rRNA binding"/>
    <property type="evidence" value="ECO:0007669"/>
    <property type="project" value="UniProtKB-UniRule"/>
</dbReference>
<dbReference type="GO" id="GO:0003735">
    <property type="term" value="F:structural constituent of ribosome"/>
    <property type="evidence" value="ECO:0007669"/>
    <property type="project" value="InterPro"/>
</dbReference>
<dbReference type="GO" id="GO:0000049">
    <property type="term" value="F:tRNA binding"/>
    <property type="evidence" value="ECO:0007669"/>
    <property type="project" value="UniProtKB-UniRule"/>
</dbReference>
<dbReference type="GO" id="GO:0006412">
    <property type="term" value="P:translation"/>
    <property type="evidence" value="ECO:0007669"/>
    <property type="project" value="UniProtKB-UniRule"/>
</dbReference>
<dbReference type="FunFam" id="1.10.8.50:FF:000001">
    <property type="entry name" value="30S ribosomal protein S13"/>
    <property type="match status" value="1"/>
</dbReference>
<dbReference type="FunFam" id="4.10.910.10:FF:000001">
    <property type="entry name" value="30S ribosomal protein S13"/>
    <property type="match status" value="1"/>
</dbReference>
<dbReference type="Gene3D" id="1.10.8.50">
    <property type="match status" value="1"/>
</dbReference>
<dbReference type="Gene3D" id="4.10.910.10">
    <property type="entry name" value="30s ribosomal protein s13, domain 2"/>
    <property type="match status" value="1"/>
</dbReference>
<dbReference type="HAMAP" id="MF_01315">
    <property type="entry name" value="Ribosomal_uS13"/>
    <property type="match status" value="1"/>
</dbReference>
<dbReference type="InterPro" id="IPR027437">
    <property type="entry name" value="Rbsml_uS13_C"/>
</dbReference>
<dbReference type="InterPro" id="IPR001892">
    <property type="entry name" value="Ribosomal_uS13"/>
</dbReference>
<dbReference type="InterPro" id="IPR010979">
    <property type="entry name" value="Ribosomal_uS13-like_H2TH"/>
</dbReference>
<dbReference type="InterPro" id="IPR019980">
    <property type="entry name" value="Ribosomal_uS13_bac-type"/>
</dbReference>
<dbReference type="InterPro" id="IPR018269">
    <property type="entry name" value="Ribosomal_uS13_CS"/>
</dbReference>
<dbReference type="NCBIfam" id="TIGR03631">
    <property type="entry name" value="uS13_bact"/>
    <property type="match status" value="1"/>
</dbReference>
<dbReference type="PANTHER" id="PTHR10871">
    <property type="entry name" value="30S RIBOSOMAL PROTEIN S13/40S RIBOSOMAL PROTEIN S18"/>
    <property type="match status" value="1"/>
</dbReference>
<dbReference type="PANTHER" id="PTHR10871:SF1">
    <property type="entry name" value="SMALL RIBOSOMAL SUBUNIT PROTEIN US13M"/>
    <property type="match status" value="1"/>
</dbReference>
<dbReference type="Pfam" id="PF00416">
    <property type="entry name" value="Ribosomal_S13"/>
    <property type="match status" value="1"/>
</dbReference>
<dbReference type="PIRSF" id="PIRSF002134">
    <property type="entry name" value="Ribosomal_S13"/>
    <property type="match status" value="1"/>
</dbReference>
<dbReference type="SUPFAM" id="SSF46946">
    <property type="entry name" value="S13-like H2TH domain"/>
    <property type="match status" value="1"/>
</dbReference>
<dbReference type="PROSITE" id="PS00646">
    <property type="entry name" value="RIBOSOMAL_S13_1"/>
    <property type="match status" value="1"/>
</dbReference>
<dbReference type="PROSITE" id="PS50159">
    <property type="entry name" value="RIBOSOMAL_S13_2"/>
    <property type="match status" value="1"/>
</dbReference>